<comment type="function">
    <text evidence="1 5 6 8 9 10 12 13 14">Major sphingomyelin synthase at the Golgi apparatus (PubMed:14685263, PubMed:17449912). Catalyzes the reversible transfer of phosphocholine moiety in sphingomyelin biosynthesis: in the forward reaction transfers phosphocholine head group of phosphatidylcholine (PC) on to ceramide (CER) to form ceramide phosphocholine (sphingomyelin, SM) and diacylglycerol (DAG) as by-product, and in the reverse reaction transfers phosphocholine from SM to DAG to form PC and CER. The direction of the reaction depends on the levels of CER and DAG in Golgi membranes (PubMed:14685263, PubMed:14976195, PubMed:17449912, PubMed:17982138, PubMed:19454763). Converts the newly synthesized CER, that is transported from the endoplasmic reticulum to the trans-Golgi by the Cer transport protein (CERT), to SM (PubMed:30242129). Can form a heteromeric complex with glucosylceramide synthase (GCS) increasing SMS activity and reducing glucosylceramide synthesis, a critical mechanism that controls the metabolic fate of CER in the Golgi (PubMed:30242129). Does not use free phosphorylcholine or CDP-choline as donor (PubMed:14685263, PubMed:14976195). Can also transfer phosphoethanolamine head group of phosphatidylethanolamine (PE) on to CER to form ceramide phosphoethanolamine (CPE) (By similarity). Regulates receptor-mediated signal transduction via mitogenic DAG and proapoptotic CER, as well as via SM, a structural component of membrane rafts that serve as platforms for signal transduction and protein sorting (PubMed:14976195, PubMed:17449912, PubMed:17982138). Plays a role in secretory transport via regulation of DAG pool at the Golgi apparatus and its downstream effects on PRKD1 (PubMed:18370930, PubMed:21980337).</text>
</comment>
<comment type="catalytic activity">
    <reaction evidence="5 6 8 9 10 14">
        <text>an N-acylsphing-4-enine + a 1,2-diacyl-sn-glycero-3-phosphocholine = a sphingomyelin + a 1,2-diacyl-sn-glycerol</text>
        <dbReference type="Rhea" id="RHEA:18765"/>
        <dbReference type="ChEBI" id="CHEBI:17636"/>
        <dbReference type="ChEBI" id="CHEBI:17815"/>
        <dbReference type="ChEBI" id="CHEBI:52639"/>
        <dbReference type="ChEBI" id="CHEBI:57643"/>
        <dbReference type="EC" id="2.7.8.27"/>
    </reaction>
    <physiologicalReaction direction="left-to-right" evidence="17 18 19 20 21 23">
        <dbReference type="Rhea" id="RHEA:18766"/>
    </physiologicalReaction>
    <physiologicalReaction direction="right-to-left" evidence="17">
        <dbReference type="Rhea" id="RHEA:18767"/>
    </physiologicalReaction>
</comment>
<comment type="catalytic activity">
    <reaction evidence="12">
        <text>an N-acylsphinganine + a 1,2-diacyl-sn-glycero-3-phosphocholine = an N-acylsphinganine-1-phosphocholine + a 1,2-diacyl-sn-glycerol</text>
        <dbReference type="Rhea" id="RHEA:44620"/>
        <dbReference type="ChEBI" id="CHEBI:17815"/>
        <dbReference type="ChEBI" id="CHEBI:31488"/>
        <dbReference type="ChEBI" id="CHEBI:57643"/>
        <dbReference type="ChEBI" id="CHEBI:67090"/>
    </reaction>
    <physiologicalReaction direction="left-to-right" evidence="17 22">
        <dbReference type="Rhea" id="RHEA:44621"/>
    </physiologicalReaction>
    <physiologicalReaction direction="right-to-left" evidence="17">
        <dbReference type="Rhea" id="RHEA:44622"/>
    </physiologicalReaction>
</comment>
<comment type="catalytic activity">
    <reaction evidence="12">
        <text>an N-acyl-(4R)-4-hydroxysphinganine + a 1,2-diacyl-sn-glycero-3-phosphocholine = an N-acyl-(4R)-4-hydroxysphinganine-phosphocholine + a 1,2-diacyl-sn-glycerol</text>
        <dbReference type="Rhea" id="RHEA:42152"/>
        <dbReference type="ChEBI" id="CHEBI:17815"/>
        <dbReference type="ChEBI" id="CHEBI:31998"/>
        <dbReference type="ChEBI" id="CHEBI:57643"/>
        <dbReference type="ChEBI" id="CHEBI:78651"/>
    </reaction>
    <physiologicalReaction direction="left-to-right" evidence="17 22">
        <dbReference type="Rhea" id="RHEA:42153"/>
    </physiologicalReaction>
    <physiologicalReaction direction="right-to-left" evidence="17">
        <dbReference type="Rhea" id="RHEA:42154"/>
    </physiologicalReaction>
</comment>
<comment type="catalytic activity">
    <reaction evidence="5">
        <text>1-(9Z-octadecenoyl)-2-acyl-sn-3-glycerol + a sphingomyelin = a 1-(9Z-octadecenoyl)-2-acyl-sn-glycero-3-phosphocholine + an N-acylsphing-4-enine</text>
        <dbReference type="Rhea" id="RHEA:43320"/>
        <dbReference type="ChEBI" id="CHEBI:17636"/>
        <dbReference type="ChEBI" id="CHEBI:52639"/>
        <dbReference type="ChEBI" id="CHEBI:78421"/>
        <dbReference type="ChEBI" id="CHEBI:82983"/>
    </reaction>
    <physiologicalReaction direction="left-to-right" evidence="17">
        <dbReference type="Rhea" id="RHEA:43321"/>
    </physiologicalReaction>
    <physiologicalReaction direction="right-to-left" evidence="17">
        <dbReference type="Rhea" id="RHEA:43322"/>
    </physiologicalReaction>
</comment>
<comment type="catalytic activity">
    <reaction evidence="12">
        <text>N-hexadecanoylsphinganine + a 1,2-diacyl-sn-glycero-3-phosphocholine = N-hexadecanoyl-sphinganine-1-phosphocholine + a 1,2-diacyl-sn-glycerol</text>
        <dbReference type="Rhea" id="RHEA:41796"/>
        <dbReference type="ChEBI" id="CHEBI:17815"/>
        <dbReference type="ChEBI" id="CHEBI:57643"/>
        <dbReference type="ChEBI" id="CHEBI:67042"/>
        <dbReference type="ChEBI" id="CHEBI:78647"/>
    </reaction>
    <physiologicalReaction direction="left-to-right" evidence="17 22">
        <dbReference type="Rhea" id="RHEA:41797"/>
    </physiologicalReaction>
    <physiologicalReaction direction="right-to-left" evidence="17">
        <dbReference type="Rhea" id="RHEA:41798"/>
    </physiologicalReaction>
</comment>
<comment type="catalytic activity">
    <reaction evidence="12">
        <text>N-hexadecanoyl-(4R)-hydroxysphinganine + a 1,2-diacyl-sn-glycero-3-phosphocholine = N-hexadecanoyl-(4R)-hydroxysphinganine-phosphocholine + a 1,2-diacyl-sn-glycerol</text>
        <dbReference type="Rhea" id="RHEA:42140"/>
        <dbReference type="ChEBI" id="CHEBI:17815"/>
        <dbReference type="ChEBI" id="CHEBI:57643"/>
        <dbReference type="ChEBI" id="CHEBI:65107"/>
        <dbReference type="ChEBI" id="CHEBI:78650"/>
    </reaction>
    <physiologicalReaction direction="left-to-right" evidence="17 22">
        <dbReference type="Rhea" id="RHEA:42141"/>
    </physiologicalReaction>
    <physiologicalReaction direction="right-to-left" evidence="17">
        <dbReference type="Rhea" id="RHEA:42142"/>
    </physiologicalReaction>
</comment>
<comment type="catalytic activity">
    <reaction evidence="1">
        <text>an N-acylsphing-4-enine + a 1,2-diacyl-sn-glycero-3-phosphoethanolamine = an N-acylsphing-4-enine 1-phosphoethanolamine + a 1,2-diacyl-sn-glycerol</text>
        <dbReference type="Rhea" id="RHEA:36079"/>
        <dbReference type="ChEBI" id="CHEBI:17815"/>
        <dbReference type="ChEBI" id="CHEBI:52639"/>
        <dbReference type="ChEBI" id="CHEBI:64612"/>
        <dbReference type="ChEBI" id="CHEBI:73203"/>
    </reaction>
    <physiologicalReaction direction="left-to-right" evidence="1">
        <dbReference type="Rhea" id="RHEA:36080"/>
    </physiologicalReaction>
</comment>
<comment type="activity regulation">
    <text evidence="5">Inhibited by bacterial PC-phospholipase C inhibitor D609.</text>
</comment>
<comment type="pathway">
    <text evidence="9">Sphingolipid metabolism.</text>
</comment>
<comment type="subcellular location">
    <subcellularLocation>
        <location evidence="5 8 11">Golgi apparatus membrane</location>
        <topology evidence="2">Multi-pass membrane protein</topology>
    </subcellularLocation>
</comment>
<comment type="alternative products">
    <event type="alternative splicing"/>
    <isoform>
        <id>Q86VZ5-1</id>
        <name>1</name>
        <sequence type="displayed"/>
    </isoform>
    <isoform>
        <id>Q86VZ5-2</id>
        <name>2</name>
        <sequence type="described" ref="VSP_027223 VSP_027224"/>
    </isoform>
</comment>
<comment type="tissue specificity">
    <text evidence="4 5 7">Brain, heart, kidney, liver, muscle and stomach.</text>
</comment>
<comment type="miscellaneous">
    <text>Overexpression of the human protein in mouse causes increased non-HDL-sphingomyelin and non-HDL cholesterol levels, decreased HDL-sphingomyelin and HDL-cholesterol levels and increases the atherogenic potential of non-HDL lipoprotein particles.</text>
</comment>
<comment type="similarity">
    <text evidence="16">Belongs to the sphingomyelin synthase family.</text>
</comment>
<gene>
    <name type="primary">SGMS1</name>
    <name type="synonym">MOB</name>
    <name type="synonym">SMS1</name>
    <name type="synonym">TMEM23</name>
</gene>
<reference key="1">
    <citation type="journal article" date="2004" name="J. Biol. Chem.">
        <title>Expression cloning of a human cDNA restoring sphingomyelin synthesis and cell growth in sphingomyelin synthase-defective lymphoid cells.</title>
        <authorList>
            <person name="Yamaoka S."/>
            <person name="Miyaji M."/>
            <person name="Kitano T."/>
            <person name="Umehara H."/>
            <person name="Okazaki T."/>
        </authorList>
    </citation>
    <scope>NUCLEOTIDE SEQUENCE [MRNA] (ISOFORM 1)</scope>
    <scope>FUNCTION</scope>
    <scope>CATALYTIC ACTIVITY</scope>
</reference>
<reference evidence="16 25" key="2">
    <citation type="submission" date="2003-04" db="EMBL/GenBank/DDBJ databases">
        <title>Complete cDNA sequence of a novel gene, human mob.</title>
        <authorList>
            <person name="Yuan H.F."/>
            <person name="Wang X."/>
            <person name="Wang D.M."/>
            <person name="Li H.M."/>
            <person name="Feng K."/>
            <person name="Bai C.X."/>
            <person name="Zhang R."/>
            <person name="Chen L."/>
            <person name="Li Y.H."/>
            <person name="Gao Y.H."/>
            <person name="Zhen M."/>
            <person name="Yue W."/>
            <person name="Xie C."/>
            <person name="Xie X.Y."/>
            <person name="Niu L.L."/>
            <person name="Gao W.J."/>
            <person name="Zhang J."/>
            <person name="Cao H."/>
            <person name="Pei X.T."/>
        </authorList>
    </citation>
    <scope>NUCLEOTIDE SEQUENCE [MRNA] (ISOFORM 1)</scope>
    <source>
        <tissue>Fetal liver</tissue>
    </source>
</reference>
<reference evidence="16 25" key="3">
    <citation type="submission" date="2003-06" db="EMBL/GenBank/DDBJ databases">
        <title>A new spermatogenesis-related gene.</title>
        <authorList>
            <person name="Zhao H."/>
            <person name="Miao S.Y."/>
            <person name="Zhang X.D."/>
            <person name="Liang G."/>
            <person name="Qiao Y."/>
            <person name="Wang L.F."/>
        </authorList>
    </citation>
    <scope>NUCLEOTIDE SEQUENCE [MRNA] (ISOFORM 1)</scope>
    <source>
        <tissue>Testis</tissue>
    </source>
</reference>
<reference key="4">
    <citation type="journal article" date="2004" name="Nat. Genet.">
        <title>Complete sequencing and characterization of 21,243 full-length human cDNAs.</title>
        <authorList>
            <person name="Ota T."/>
            <person name="Suzuki Y."/>
            <person name="Nishikawa T."/>
            <person name="Otsuki T."/>
            <person name="Sugiyama T."/>
            <person name="Irie R."/>
            <person name="Wakamatsu A."/>
            <person name="Hayashi K."/>
            <person name="Sato H."/>
            <person name="Nagai K."/>
            <person name="Kimura K."/>
            <person name="Makita H."/>
            <person name="Sekine M."/>
            <person name="Obayashi M."/>
            <person name="Nishi T."/>
            <person name="Shibahara T."/>
            <person name="Tanaka T."/>
            <person name="Ishii S."/>
            <person name="Yamamoto J."/>
            <person name="Saito K."/>
            <person name="Kawai Y."/>
            <person name="Isono Y."/>
            <person name="Nakamura Y."/>
            <person name="Nagahari K."/>
            <person name="Murakami K."/>
            <person name="Yasuda T."/>
            <person name="Iwayanagi T."/>
            <person name="Wagatsuma M."/>
            <person name="Shiratori A."/>
            <person name="Sudo H."/>
            <person name="Hosoiri T."/>
            <person name="Kaku Y."/>
            <person name="Kodaira H."/>
            <person name="Kondo H."/>
            <person name="Sugawara M."/>
            <person name="Takahashi M."/>
            <person name="Kanda K."/>
            <person name="Yokoi T."/>
            <person name="Furuya T."/>
            <person name="Kikkawa E."/>
            <person name="Omura Y."/>
            <person name="Abe K."/>
            <person name="Kamihara K."/>
            <person name="Katsuta N."/>
            <person name="Sato K."/>
            <person name="Tanikawa M."/>
            <person name="Yamazaki M."/>
            <person name="Ninomiya K."/>
            <person name="Ishibashi T."/>
            <person name="Yamashita H."/>
            <person name="Murakawa K."/>
            <person name="Fujimori K."/>
            <person name="Tanai H."/>
            <person name="Kimata M."/>
            <person name="Watanabe M."/>
            <person name="Hiraoka S."/>
            <person name="Chiba Y."/>
            <person name="Ishida S."/>
            <person name="Ono Y."/>
            <person name="Takiguchi S."/>
            <person name="Watanabe S."/>
            <person name="Yosida M."/>
            <person name="Hotuta T."/>
            <person name="Kusano J."/>
            <person name="Kanehori K."/>
            <person name="Takahashi-Fujii A."/>
            <person name="Hara H."/>
            <person name="Tanase T.-O."/>
            <person name="Nomura Y."/>
            <person name="Togiya S."/>
            <person name="Komai F."/>
            <person name="Hara R."/>
            <person name="Takeuchi K."/>
            <person name="Arita M."/>
            <person name="Imose N."/>
            <person name="Musashino K."/>
            <person name="Yuuki H."/>
            <person name="Oshima A."/>
            <person name="Sasaki N."/>
            <person name="Aotsuka S."/>
            <person name="Yoshikawa Y."/>
            <person name="Matsunawa H."/>
            <person name="Ichihara T."/>
            <person name="Shiohata N."/>
            <person name="Sano S."/>
            <person name="Moriya S."/>
            <person name="Momiyama H."/>
            <person name="Satoh N."/>
            <person name="Takami S."/>
            <person name="Terashima Y."/>
            <person name="Suzuki O."/>
            <person name="Nakagawa S."/>
            <person name="Senoh A."/>
            <person name="Mizoguchi H."/>
            <person name="Goto Y."/>
            <person name="Shimizu F."/>
            <person name="Wakebe H."/>
            <person name="Hishigaki H."/>
            <person name="Watanabe T."/>
            <person name="Sugiyama A."/>
            <person name="Takemoto M."/>
            <person name="Kawakami B."/>
            <person name="Yamazaki M."/>
            <person name="Watanabe K."/>
            <person name="Kumagai A."/>
            <person name="Itakura S."/>
            <person name="Fukuzumi Y."/>
            <person name="Fujimori Y."/>
            <person name="Komiyama M."/>
            <person name="Tashiro H."/>
            <person name="Tanigami A."/>
            <person name="Fujiwara T."/>
            <person name="Ono T."/>
            <person name="Yamada K."/>
            <person name="Fujii Y."/>
            <person name="Ozaki K."/>
            <person name="Hirao M."/>
            <person name="Ohmori Y."/>
            <person name="Kawabata A."/>
            <person name="Hikiji T."/>
            <person name="Kobatake N."/>
            <person name="Inagaki H."/>
            <person name="Ikema Y."/>
            <person name="Okamoto S."/>
            <person name="Okitani R."/>
            <person name="Kawakami T."/>
            <person name="Noguchi S."/>
            <person name="Itoh T."/>
            <person name="Shigeta K."/>
            <person name="Senba T."/>
            <person name="Matsumura K."/>
            <person name="Nakajima Y."/>
            <person name="Mizuno T."/>
            <person name="Morinaga M."/>
            <person name="Sasaki M."/>
            <person name="Togashi T."/>
            <person name="Oyama M."/>
            <person name="Hata H."/>
            <person name="Watanabe M."/>
            <person name="Komatsu T."/>
            <person name="Mizushima-Sugano J."/>
            <person name="Satoh T."/>
            <person name="Shirai Y."/>
            <person name="Takahashi Y."/>
            <person name="Nakagawa K."/>
            <person name="Okumura K."/>
            <person name="Nagase T."/>
            <person name="Nomura N."/>
            <person name="Kikuchi H."/>
            <person name="Masuho Y."/>
            <person name="Yamashita R."/>
            <person name="Nakai K."/>
            <person name="Yada T."/>
            <person name="Nakamura Y."/>
            <person name="Ohara O."/>
            <person name="Isogai T."/>
            <person name="Sugano S."/>
        </authorList>
    </citation>
    <scope>NUCLEOTIDE SEQUENCE [LARGE SCALE MRNA] (ISOFORM 1)</scope>
    <source>
        <tissue>Lung</tissue>
    </source>
</reference>
<reference key="5">
    <citation type="journal article" date="2004" name="Nature">
        <title>The DNA sequence and comparative analysis of human chromosome 10.</title>
        <authorList>
            <person name="Deloukas P."/>
            <person name="Earthrowl M.E."/>
            <person name="Grafham D.V."/>
            <person name="Rubenfield M."/>
            <person name="French L."/>
            <person name="Steward C.A."/>
            <person name="Sims S.K."/>
            <person name="Jones M.C."/>
            <person name="Searle S."/>
            <person name="Scott C."/>
            <person name="Howe K."/>
            <person name="Hunt S.E."/>
            <person name="Andrews T.D."/>
            <person name="Gilbert J.G.R."/>
            <person name="Swarbreck D."/>
            <person name="Ashurst J.L."/>
            <person name="Taylor A."/>
            <person name="Battles J."/>
            <person name="Bird C.P."/>
            <person name="Ainscough R."/>
            <person name="Almeida J.P."/>
            <person name="Ashwell R.I.S."/>
            <person name="Ambrose K.D."/>
            <person name="Babbage A.K."/>
            <person name="Bagguley C.L."/>
            <person name="Bailey J."/>
            <person name="Banerjee R."/>
            <person name="Bates K."/>
            <person name="Beasley H."/>
            <person name="Bray-Allen S."/>
            <person name="Brown A.J."/>
            <person name="Brown J.Y."/>
            <person name="Burford D.C."/>
            <person name="Burrill W."/>
            <person name="Burton J."/>
            <person name="Cahill P."/>
            <person name="Camire D."/>
            <person name="Carter N.P."/>
            <person name="Chapman J.C."/>
            <person name="Clark S.Y."/>
            <person name="Clarke G."/>
            <person name="Clee C.M."/>
            <person name="Clegg S."/>
            <person name="Corby N."/>
            <person name="Coulson A."/>
            <person name="Dhami P."/>
            <person name="Dutta I."/>
            <person name="Dunn M."/>
            <person name="Faulkner L."/>
            <person name="Frankish A."/>
            <person name="Frankland J.A."/>
            <person name="Garner P."/>
            <person name="Garnett J."/>
            <person name="Gribble S."/>
            <person name="Griffiths C."/>
            <person name="Grocock R."/>
            <person name="Gustafson E."/>
            <person name="Hammond S."/>
            <person name="Harley J.L."/>
            <person name="Hart E."/>
            <person name="Heath P.D."/>
            <person name="Ho T.P."/>
            <person name="Hopkins B."/>
            <person name="Horne J."/>
            <person name="Howden P.J."/>
            <person name="Huckle E."/>
            <person name="Hynds C."/>
            <person name="Johnson C."/>
            <person name="Johnson D."/>
            <person name="Kana A."/>
            <person name="Kay M."/>
            <person name="Kimberley A.M."/>
            <person name="Kershaw J.K."/>
            <person name="Kokkinaki M."/>
            <person name="Laird G.K."/>
            <person name="Lawlor S."/>
            <person name="Lee H.M."/>
            <person name="Leongamornlert D.A."/>
            <person name="Laird G."/>
            <person name="Lloyd C."/>
            <person name="Lloyd D.M."/>
            <person name="Loveland J."/>
            <person name="Lovell J."/>
            <person name="McLaren S."/>
            <person name="McLay K.E."/>
            <person name="McMurray A."/>
            <person name="Mashreghi-Mohammadi M."/>
            <person name="Matthews L."/>
            <person name="Milne S."/>
            <person name="Nickerson T."/>
            <person name="Nguyen M."/>
            <person name="Overton-Larty E."/>
            <person name="Palmer S.A."/>
            <person name="Pearce A.V."/>
            <person name="Peck A.I."/>
            <person name="Pelan S."/>
            <person name="Phillimore B."/>
            <person name="Porter K."/>
            <person name="Rice C.M."/>
            <person name="Rogosin A."/>
            <person name="Ross M.T."/>
            <person name="Sarafidou T."/>
            <person name="Sehra H.K."/>
            <person name="Shownkeen R."/>
            <person name="Skuce C.D."/>
            <person name="Smith M."/>
            <person name="Standring L."/>
            <person name="Sycamore N."/>
            <person name="Tester J."/>
            <person name="Thorpe A."/>
            <person name="Torcasso W."/>
            <person name="Tracey A."/>
            <person name="Tromans A."/>
            <person name="Tsolas J."/>
            <person name="Wall M."/>
            <person name="Walsh J."/>
            <person name="Wang H."/>
            <person name="Weinstock K."/>
            <person name="West A.P."/>
            <person name="Willey D.L."/>
            <person name="Whitehead S.L."/>
            <person name="Wilming L."/>
            <person name="Wray P.W."/>
            <person name="Young L."/>
            <person name="Chen Y."/>
            <person name="Lovering R.C."/>
            <person name="Moschonas N.K."/>
            <person name="Siebert R."/>
            <person name="Fechtel K."/>
            <person name="Bentley D."/>
            <person name="Durbin R.M."/>
            <person name="Hubbard T."/>
            <person name="Doucette-Stamm L."/>
            <person name="Beck S."/>
            <person name="Smith D.R."/>
            <person name="Rogers J."/>
        </authorList>
    </citation>
    <scope>NUCLEOTIDE SEQUENCE [LARGE SCALE GENOMIC DNA]</scope>
</reference>
<reference key="6">
    <citation type="submission" date="2005-09" db="EMBL/GenBank/DDBJ databases">
        <authorList>
            <person name="Mural R.J."/>
            <person name="Istrail S."/>
            <person name="Sutton G.G."/>
            <person name="Florea L."/>
            <person name="Halpern A.L."/>
            <person name="Mobarry C.M."/>
            <person name="Lippert R."/>
            <person name="Walenz B."/>
            <person name="Shatkay H."/>
            <person name="Dew I."/>
            <person name="Miller J.R."/>
            <person name="Flanigan M.J."/>
            <person name="Edwards N.J."/>
            <person name="Bolanos R."/>
            <person name="Fasulo D."/>
            <person name="Halldorsson B.V."/>
            <person name="Hannenhalli S."/>
            <person name="Turner R."/>
            <person name="Yooseph S."/>
            <person name="Lu F."/>
            <person name="Nusskern D.R."/>
            <person name="Shue B.C."/>
            <person name="Zheng X.H."/>
            <person name="Zhong F."/>
            <person name="Delcher A.L."/>
            <person name="Huson D.H."/>
            <person name="Kravitz S.A."/>
            <person name="Mouchard L."/>
            <person name="Reinert K."/>
            <person name="Remington K.A."/>
            <person name="Clark A.G."/>
            <person name="Waterman M.S."/>
            <person name="Eichler E.E."/>
            <person name="Adams M.D."/>
            <person name="Hunkapiller M.W."/>
            <person name="Myers E.W."/>
            <person name="Venter J.C."/>
        </authorList>
    </citation>
    <scope>NUCLEOTIDE SEQUENCE [LARGE SCALE GENOMIC DNA]</scope>
</reference>
<reference key="7">
    <citation type="journal article" date="2004" name="Genome Res.">
        <title>The status, quality, and expansion of the NIH full-length cDNA project: the Mammalian Gene Collection (MGC).</title>
        <authorList>
            <consortium name="The MGC Project Team"/>
        </authorList>
    </citation>
    <scope>NUCLEOTIDE SEQUENCE [LARGE SCALE MRNA] (ISOFORM 1)</scope>
    <source>
        <tissue>Lymph</tissue>
    </source>
</reference>
<reference key="8">
    <citation type="journal article" date="2004" name="Gene">
        <title>Human gene MOB: structure specification and aspects of transcriptional activity.</title>
        <authorList>
            <person name="Vladychenskaya I.P."/>
            <person name="Dergunova L.V."/>
            <person name="Dmitrieva V.G."/>
            <person name="Limborska S.A."/>
        </authorList>
    </citation>
    <scope>NUCLEOTIDE SEQUENCE [MRNA] OF 1-290 (ISOFORM 2)</scope>
    <scope>IDENTIFICATION (ISOFORM 1)</scope>
    <scope>TISSUE SPECIFICITY</scope>
    <source>
        <tissue>Cerebellum</tissue>
    </source>
</reference>
<reference key="9">
    <citation type="submission" date="2003-06" db="EMBL/GenBank/DDBJ databases">
        <title>Structure and functional organization of a novel human brain-specific gene MOB encoding a phylogenetically conserved transmembrane protein.</title>
        <authorList>
            <person name="Vladychenskaya I.P."/>
            <person name="Dergunova L.V."/>
            <person name="Limborska S.A."/>
            <person name="Dmitrieva V.G."/>
        </authorList>
    </citation>
    <scope>NUCLEOTIDE SEQUENCE [MRNA] OF 1-277 (ISOFORM 1)</scope>
</reference>
<reference key="10">
    <citation type="journal article" date="2002" name="Biomol. Eng.">
        <title>In vitro and in silico analysis of the predicted human MOB gene encoding a phylogenetically conserved transmembrane protein.</title>
        <authorList>
            <person name="Vladychenskaya I.P."/>
            <person name="Dergunova L.V."/>
            <person name="Limborska S.A."/>
        </authorList>
    </citation>
    <scope>IDENTIFICATION (ISOFORM 1)</scope>
    <scope>TISSUE SPECIFICITY</scope>
</reference>
<reference key="11">
    <citation type="journal article" date="2004" name="EMBO J.">
        <title>Identification of a family of animal sphingomyelin synthases.</title>
        <authorList>
            <person name="Huitema K."/>
            <person name="Van Den Dikkenberg J."/>
            <person name="Brouwers J.F.H.M."/>
            <person name="Holthuis J.C."/>
        </authorList>
    </citation>
    <scope>FUNCTION</scope>
    <scope>CATALYTIC ACTIVITY</scope>
    <scope>SUBCELLULAR LOCATION</scope>
    <scope>TISSUE SPECIFICITY</scope>
    <scope>ACTIVITY REGULATION</scope>
    <scope>TOPOLOGY OF C-TERMINUS</scope>
</reference>
<reference key="12">
    <citation type="journal article" date="2006" name="J. Lipid Res.">
        <title>Adenovirus-mediated overexpression of sphingomyelin synthases 1 and 2 increases the atherogenic potential in mice.</title>
        <authorList>
            <person name="Dong J."/>
            <person name="Liu J."/>
            <person name="Lou B."/>
            <person name="Li Z."/>
            <person name="Ye X."/>
            <person name="Wu M."/>
            <person name="Jiang X.-C."/>
        </authorList>
    </citation>
    <scope>OVEREXPRESSION IN MOUSE</scope>
</reference>
<reference key="13">
    <citation type="journal article" date="2007" name="J. Biol. Chem.">
        <title>Both sphingomyelin synthases SMS1 and SMS2 are required for sphingomyelin homeostasis and growth in human HeLa cells.</title>
        <authorList>
            <person name="Tafesse F.G."/>
            <person name="Huitema K."/>
            <person name="Hermansson M."/>
            <person name="van der Poel S."/>
            <person name="van den Dikkenberg J."/>
            <person name="Uphoff A."/>
            <person name="Somerharju P."/>
            <person name="Holthuis J.C.M."/>
        </authorList>
    </citation>
    <scope>FUNCTION</scope>
    <scope>CATALYTIC ACTIVITY</scope>
    <scope>SUBCELLULAR LOCATION</scope>
</reference>
<reference key="14">
    <citation type="journal article" date="2008" name="Biochim. Biophys. Acta">
        <title>The domain responsible for sphingomyelin synthase (SMS) activity.</title>
        <authorList>
            <person name="Yeang C."/>
            <person name="Varshney S."/>
            <person name="Wang R."/>
            <person name="Zhang Y."/>
            <person name="Ye D."/>
            <person name="Jiang X.C."/>
        </authorList>
    </citation>
    <scope>ACTIVE SITES</scope>
    <scope>SUBCELLULAR LOCATION</scope>
    <scope>MUTAGENESIS OF SER-283; HIS-285; HIS-328 AND ASP-332</scope>
</reference>
<reference key="15">
    <citation type="journal article" date="2008" name="Biochem. J.">
        <title>Sphingomyelin synthases regulate production of diacylglycerol at the Golgi.</title>
        <authorList>
            <person name="Villani M."/>
            <person name="Subathra M."/>
            <person name="Im Y.B."/>
            <person name="Choi Y."/>
            <person name="Signorelli P."/>
            <person name="Del Poeta M."/>
            <person name="Luberto C."/>
        </authorList>
    </citation>
    <scope>FUNCTION</scope>
    <scope>CATALYTIC ACTIVITY</scope>
</reference>
<reference key="16">
    <citation type="journal article" date="2008" name="J. Lipid Res.">
        <title>SMS overexpression and knockdown: impact on cellular sphingomyelin and diacylglycerol metabolism, and cell apoptosis.</title>
        <authorList>
            <person name="Ding T."/>
            <person name="Li Z."/>
            <person name="Hailemariam T."/>
            <person name="Mukherjee S."/>
            <person name="Maxfield F.R."/>
            <person name="Wu M.P."/>
            <person name="Jiang X.C."/>
        </authorList>
    </citation>
    <scope>FUNCTION</scope>
    <scope>CATALYTIC ACTIVITY</scope>
    <scope>PATHWAY</scope>
</reference>
<reference key="17">
    <citation type="journal article" date="2009" name="J. Lipid Res.">
        <title>Sphingomyelin synthase SMS2 displays dual activity as ceramide phosphoethanolamine synthase.</title>
        <authorList>
            <person name="Ternes P."/>
            <person name="Brouwers J.F."/>
            <person name="van den Dikkenberg J."/>
            <person name="Holthuis J.C."/>
        </authorList>
    </citation>
    <scope>FUNCTION</scope>
    <scope>CATALYTIC ACTIVITY</scope>
</reference>
<reference key="18">
    <citation type="journal article" date="2011" name="PLoS ONE">
        <title>Sphingomyelin synthases regulate protein trafficking and secretion.</title>
        <authorList>
            <person name="Subathra M."/>
            <person name="Qureshi A."/>
            <person name="Luberto C."/>
        </authorList>
    </citation>
    <scope>FUNCTION</scope>
</reference>
<reference key="19">
    <citation type="journal article" date="2013" name="J. Proteome Res.">
        <title>Toward a comprehensive characterization of a human cancer cell phosphoproteome.</title>
        <authorList>
            <person name="Zhou H."/>
            <person name="Di Palma S."/>
            <person name="Preisinger C."/>
            <person name="Peng M."/>
            <person name="Polat A.N."/>
            <person name="Heck A.J."/>
            <person name="Mohammed S."/>
        </authorList>
    </citation>
    <scope>PHOSPHORYLATION [LARGE SCALE ANALYSIS] AT SER-8</scope>
    <scope>IDENTIFICATION BY MASS SPECTROMETRY [LARGE SCALE ANALYSIS]</scope>
    <source>
        <tissue>Erythroleukemia</tissue>
    </source>
</reference>
<reference key="20">
    <citation type="journal article" date="2018" name="J. Biol. Chem.">
        <title>Complex formation of sphingomyelin synthase 1 with glucosylceramide synthase increases sphingomyelin and decreases glucosylceramide levels.</title>
        <authorList>
            <person name="Hayashi Y."/>
            <person name="Nemoto-Sasaki Y."/>
            <person name="Matsumoto N."/>
            <person name="Hama K."/>
            <person name="Tanikawa T."/>
            <person name="Oka S."/>
            <person name="Saeki T."/>
            <person name="Kumasaka T."/>
            <person name="Koizumi T."/>
            <person name="Arai S."/>
            <person name="Wada I."/>
            <person name="Yokoyama K."/>
            <person name="Sugiura T."/>
            <person name="Yamashita A."/>
        </authorList>
    </citation>
    <scope>FUNCTION</scope>
    <scope>CATALYTIC ACTIVITY</scope>
</reference>
<protein>
    <recommendedName>
        <fullName>Phosphatidylcholine:ceramide cholinephosphotransferase 1</fullName>
        <ecNumber evidence="5 6 8 9 10">2.7.8.27</ecNumber>
    </recommendedName>
    <alternativeName>
        <fullName>Medulla oblongata-derived protein</fullName>
        <shortName>Protein Mob</shortName>
    </alternativeName>
    <alternativeName>
        <fullName>Sphingomyelin synthase 1</fullName>
    </alternativeName>
    <alternativeName>
        <fullName>Transmembrane protein 23</fullName>
    </alternativeName>
</protein>
<keyword id="KW-0025">Alternative splicing</keyword>
<keyword id="KW-0053">Apoptosis</keyword>
<keyword id="KW-0333">Golgi apparatus</keyword>
<keyword id="KW-0418">Kinase</keyword>
<keyword id="KW-0443">Lipid metabolism</keyword>
<keyword id="KW-0472">Membrane</keyword>
<keyword id="KW-0597">Phosphoprotein</keyword>
<keyword id="KW-1267">Proteomics identification</keyword>
<keyword id="KW-1185">Reference proteome</keyword>
<keyword id="KW-0746">Sphingolipid metabolism</keyword>
<keyword id="KW-0808">Transferase</keyword>
<keyword id="KW-0812">Transmembrane</keyword>
<keyword id="KW-1133">Transmembrane helix</keyword>
<name>SMS1_HUMAN</name>
<dbReference type="EC" id="2.7.8.27" evidence="5 6 8 9 10"/>
<dbReference type="EMBL" id="AB154421">
    <property type="protein sequence ID" value="BAD16809.1"/>
    <property type="molecule type" value="mRNA"/>
</dbReference>
<dbReference type="EMBL" id="AY280959">
    <property type="protein sequence ID" value="AAP37279.1"/>
    <property type="molecule type" value="mRNA"/>
</dbReference>
<dbReference type="EMBL" id="AY312431">
    <property type="protein sequence ID" value="AAQ82051.1"/>
    <property type="molecule type" value="mRNA"/>
</dbReference>
<dbReference type="EMBL" id="AK026683">
    <property type="status" value="NOT_ANNOTATED_CDS"/>
    <property type="molecule type" value="mRNA"/>
</dbReference>
<dbReference type="EMBL" id="CH471142">
    <property type="protein sequence ID" value="EAW80430.1"/>
    <property type="molecule type" value="Genomic_DNA"/>
</dbReference>
<dbReference type="EMBL" id="CH471142">
    <property type="protein sequence ID" value="EAW80429.1"/>
    <property type="molecule type" value="Genomic_DNA"/>
</dbReference>
<dbReference type="EMBL" id="CH471142">
    <property type="protein sequence ID" value="EAW80431.1"/>
    <property type="molecule type" value="Genomic_DNA"/>
</dbReference>
<dbReference type="EMBL" id="CH471142">
    <property type="protein sequence ID" value="EAW80432.1"/>
    <property type="molecule type" value="Genomic_DNA"/>
</dbReference>
<dbReference type="EMBL" id="AC069547">
    <property type="status" value="NOT_ANNOTATED_CDS"/>
    <property type="molecule type" value="Genomic_DNA"/>
</dbReference>
<dbReference type="EMBL" id="AL117341">
    <property type="status" value="NOT_ANNOTATED_CDS"/>
    <property type="molecule type" value="Genomic_DNA"/>
</dbReference>
<dbReference type="EMBL" id="AL596137">
    <property type="status" value="NOT_ANNOTATED_CDS"/>
    <property type="molecule type" value="Genomic_DNA"/>
</dbReference>
<dbReference type="EMBL" id="BC042899">
    <property type="protein sequence ID" value="AAH42899.1"/>
    <property type="molecule type" value="mRNA"/>
</dbReference>
<dbReference type="EMBL" id="AY364088">
    <property type="protein sequence ID" value="AAR13294.1"/>
    <property type="molecule type" value="mRNA"/>
</dbReference>
<dbReference type="EMBL" id="AY332650">
    <property type="protein sequence ID" value="AAQ22363.1"/>
    <property type="molecule type" value="mRNA"/>
</dbReference>
<dbReference type="EMBL" id="BN000143">
    <property type="protein sequence ID" value="CAD79708.1"/>
    <property type="molecule type" value="mRNA"/>
</dbReference>
<dbReference type="CCDS" id="CCDS7240.1">
    <molecule id="Q86VZ5-1"/>
</dbReference>
<dbReference type="RefSeq" id="NP_671512.1">
    <molecule id="Q86VZ5-1"/>
    <property type="nucleotide sequence ID" value="NM_147156.4"/>
</dbReference>
<dbReference type="RefSeq" id="XP_005269732.1">
    <molecule id="Q86VZ5-1"/>
    <property type="nucleotide sequence ID" value="XM_005269675.2"/>
</dbReference>
<dbReference type="RefSeq" id="XP_011537884.1">
    <property type="nucleotide sequence ID" value="XM_011539582.2"/>
</dbReference>
<dbReference type="RefSeq" id="XP_011537885.1">
    <molecule id="Q86VZ5-1"/>
    <property type="nucleotide sequence ID" value="XM_011539583.3"/>
</dbReference>
<dbReference type="RefSeq" id="XP_047280929.1">
    <molecule id="Q86VZ5-1"/>
    <property type="nucleotide sequence ID" value="XM_047424973.1"/>
</dbReference>
<dbReference type="RefSeq" id="XP_047280930.1">
    <molecule id="Q86VZ5-1"/>
    <property type="nucleotide sequence ID" value="XM_047424974.1"/>
</dbReference>
<dbReference type="RefSeq" id="XP_047280931.1">
    <molecule id="Q86VZ5-1"/>
    <property type="nucleotide sequence ID" value="XM_047424975.1"/>
</dbReference>
<dbReference type="RefSeq" id="XP_047280932.1">
    <molecule id="Q86VZ5-1"/>
    <property type="nucleotide sequence ID" value="XM_047424976.1"/>
</dbReference>
<dbReference type="RefSeq" id="XP_047280933.1">
    <molecule id="Q86VZ5-1"/>
    <property type="nucleotide sequence ID" value="XM_047424977.1"/>
</dbReference>
<dbReference type="RefSeq" id="XP_047280934.1">
    <molecule id="Q86VZ5-1"/>
    <property type="nucleotide sequence ID" value="XM_047424978.1"/>
</dbReference>
<dbReference type="RefSeq" id="XP_054221410.1">
    <molecule id="Q86VZ5-1"/>
    <property type="nucleotide sequence ID" value="XM_054365435.1"/>
</dbReference>
<dbReference type="RefSeq" id="XP_054221411.1">
    <molecule id="Q86VZ5-1"/>
    <property type="nucleotide sequence ID" value="XM_054365436.1"/>
</dbReference>
<dbReference type="RefSeq" id="XP_054221412.1">
    <molecule id="Q86VZ5-1"/>
    <property type="nucleotide sequence ID" value="XM_054365437.1"/>
</dbReference>
<dbReference type="SMR" id="Q86VZ5"/>
<dbReference type="BioGRID" id="129227">
    <property type="interactions" value="16"/>
</dbReference>
<dbReference type="CORUM" id="Q86VZ5"/>
<dbReference type="FunCoup" id="Q86VZ5">
    <property type="interactions" value="2007"/>
</dbReference>
<dbReference type="IntAct" id="Q86VZ5">
    <property type="interactions" value="1"/>
</dbReference>
<dbReference type="STRING" id="9606.ENSP00000354829"/>
<dbReference type="BindingDB" id="Q86VZ5"/>
<dbReference type="ChEMBL" id="CHEMBL3611965"/>
<dbReference type="DrugBank" id="DB18213">
    <property type="generic name" value="Idroxioleic acid"/>
</dbReference>
<dbReference type="GuidetoPHARMACOLOGY" id="2520"/>
<dbReference type="SwissLipids" id="SLP:000000171"/>
<dbReference type="iPTMnet" id="Q86VZ5"/>
<dbReference type="PhosphoSitePlus" id="Q86VZ5"/>
<dbReference type="BioMuta" id="SGMS1"/>
<dbReference type="DMDM" id="44888473"/>
<dbReference type="jPOST" id="Q86VZ5"/>
<dbReference type="MassIVE" id="Q86VZ5"/>
<dbReference type="PaxDb" id="9606-ENSP00000354829"/>
<dbReference type="PeptideAtlas" id="Q86VZ5"/>
<dbReference type="ProteomicsDB" id="12771"/>
<dbReference type="ProteomicsDB" id="70096">
    <molecule id="Q86VZ5-1"/>
</dbReference>
<dbReference type="ProteomicsDB" id="70097">
    <molecule id="Q86VZ5-2"/>
</dbReference>
<dbReference type="Pumba" id="Q86VZ5"/>
<dbReference type="Antibodypedia" id="27870">
    <property type="antibodies" value="203 antibodies from 25 providers"/>
</dbReference>
<dbReference type="DNASU" id="259230"/>
<dbReference type="Ensembl" id="ENST00000361781.7">
    <molecule id="Q86VZ5-1"/>
    <property type="protein sequence ID" value="ENSP00000354829.2"/>
    <property type="gene ID" value="ENSG00000198964.14"/>
</dbReference>
<dbReference type="GeneID" id="259230"/>
<dbReference type="KEGG" id="hsa:259230"/>
<dbReference type="MANE-Select" id="ENST00000361781.7">
    <property type="protein sequence ID" value="ENSP00000354829.2"/>
    <property type="RefSeq nucleotide sequence ID" value="NM_147156.4"/>
    <property type="RefSeq protein sequence ID" value="NP_671512.1"/>
</dbReference>
<dbReference type="UCSC" id="uc001jje.4">
    <property type="organism name" value="human"/>
</dbReference>
<dbReference type="AGR" id="HGNC:29799"/>
<dbReference type="CTD" id="259230"/>
<dbReference type="DisGeNET" id="259230"/>
<dbReference type="GeneCards" id="SGMS1"/>
<dbReference type="HGNC" id="HGNC:29799">
    <property type="gene designation" value="SGMS1"/>
</dbReference>
<dbReference type="HPA" id="ENSG00000198964">
    <property type="expression patterns" value="Low tissue specificity"/>
</dbReference>
<dbReference type="MIM" id="611573">
    <property type="type" value="gene"/>
</dbReference>
<dbReference type="neXtProt" id="NX_Q86VZ5"/>
<dbReference type="OpenTargets" id="ENSG00000198964"/>
<dbReference type="PharmGKB" id="PA162403042"/>
<dbReference type="VEuPathDB" id="HostDB:ENSG00000198964"/>
<dbReference type="eggNOG" id="KOG3058">
    <property type="taxonomic scope" value="Eukaryota"/>
</dbReference>
<dbReference type="GeneTree" id="ENSGT00940000158306"/>
<dbReference type="InParanoid" id="Q86VZ5"/>
<dbReference type="OMA" id="HWPLRCP"/>
<dbReference type="OrthoDB" id="422827at2759"/>
<dbReference type="PAN-GO" id="Q86VZ5">
    <property type="GO annotations" value="7 GO annotations based on evolutionary models"/>
</dbReference>
<dbReference type="PhylomeDB" id="Q86VZ5"/>
<dbReference type="TreeFam" id="TF314547"/>
<dbReference type="BRENDA" id="2.7.8.27">
    <property type="organism ID" value="2681"/>
</dbReference>
<dbReference type="PathwayCommons" id="Q86VZ5"/>
<dbReference type="Reactome" id="R-HSA-1660661">
    <property type="pathway name" value="Sphingolipid de novo biosynthesis"/>
</dbReference>
<dbReference type="SignaLink" id="Q86VZ5"/>
<dbReference type="BioGRID-ORCS" id="259230">
    <property type="hits" value="34 hits in 1158 CRISPR screens"/>
</dbReference>
<dbReference type="ChiTaRS" id="SGMS1">
    <property type="organism name" value="human"/>
</dbReference>
<dbReference type="GeneWiki" id="SGMS1"/>
<dbReference type="GenomeRNAi" id="259230"/>
<dbReference type="Pharos" id="Q86VZ5">
    <property type="development level" value="Tchem"/>
</dbReference>
<dbReference type="PRO" id="PR:Q86VZ5"/>
<dbReference type="Proteomes" id="UP000005640">
    <property type="component" value="Chromosome 10"/>
</dbReference>
<dbReference type="RNAct" id="Q86VZ5">
    <property type="molecule type" value="protein"/>
</dbReference>
<dbReference type="Bgee" id="ENSG00000198964">
    <property type="expression patterns" value="Expressed in adrenal tissue and 204 other cell types or tissues"/>
</dbReference>
<dbReference type="ExpressionAtlas" id="Q86VZ5">
    <property type="expression patterns" value="baseline and differential"/>
</dbReference>
<dbReference type="GO" id="GO:0005783">
    <property type="term" value="C:endoplasmic reticulum"/>
    <property type="evidence" value="ECO:0000304"/>
    <property type="project" value="HGNC-UCL"/>
</dbReference>
<dbReference type="GO" id="GO:0005789">
    <property type="term" value="C:endoplasmic reticulum membrane"/>
    <property type="evidence" value="ECO:0000318"/>
    <property type="project" value="GO_Central"/>
</dbReference>
<dbReference type="GO" id="GO:0000139">
    <property type="term" value="C:Golgi membrane"/>
    <property type="evidence" value="ECO:0000314"/>
    <property type="project" value="UniProtKB"/>
</dbReference>
<dbReference type="GO" id="GO:0000138">
    <property type="term" value="C:Golgi trans cisterna"/>
    <property type="evidence" value="ECO:0000314"/>
    <property type="project" value="MGI"/>
</dbReference>
<dbReference type="GO" id="GO:0016020">
    <property type="term" value="C:membrane"/>
    <property type="evidence" value="ECO:0007005"/>
    <property type="project" value="UniProtKB"/>
</dbReference>
<dbReference type="GO" id="GO:0005634">
    <property type="term" value="C:nucleus"/>
    <property type="evidence" value="ECO:0000304"/>
    <property type="project" value="HGNC-UCL"/>
</dbReference>
<dbReference type="GO" id="GO:0005886">
    <property type="term" value="C:plasma membrane"/>
    <property type="evidence" value="ECO:0000318"/>
    <property type="project" value="GO_Central"/>
</dbReference>
<dbReference type="GO" id="GO:0047493">
    <property type="term" value="F:ceramide cholinephosphotransferase activity"/>
    <property type="evidence" value="ECO:0000314"/>
    <property type="project" value="UniProtKB"/>
</dbReference>
<dbReference type="GO" id="GO:0002950">
    <property type="term" value="F:ceramide phosphoethanolamine synthase activity"/>
    <property type="evidence" value="ECO:0000314"/>
    <property type="project" value="MGI"/>
</dbReference>
<dbReference type="GO" id="GO:0016301">
    <property type="term" value="F:kinase activity"/>
    <property type="evidence" value="ECO:0007669"/>
    <property type="project" value="UniProtKB-KW"/>
</dbReference>
<dbReference type="GO" id="GO:0033188">
    <property type="term" value="F:sphingomyelin synthase activity"/>
    <property type="evidence" value="ECO:0000314"/>
    <property type="project" value="UniProtKB"/>
</dbReference>
<dbReference type="GO" id="GO:0006915">
    <property type="term" value="P:apoptotic process"/>
    <property type="evidence" value="ECO:0007669"/>
    <property type="project" value="UniProtKB-KW"/>
</dbReference>
<dbReference type="GO" id="GO:0046513">
    <property type="term" value="P:ceramide biosynthetic process"/>
    <property type="evidence" value="ECO:0000314"/>
    <property type="project" value="MGI"/>
</dbReference>
<dbReference type="GO" id="GO:2001242">
    <property type="term" value="P:regulation of intrinsic apoptotic signaling pathway"/>
    <property type="evidence" value="ECO:0000304"/>
    <property type="project" value="HGNC-UCL"/>
</dbReference>
<dbReference type="GO" id="GO:0030148">
    <property type="term" value="P:sphingolipid biosynthetic process"/>
    <property type="evidence" value="ECO:0000304"/>
    <property type="project" value="Reactome"/>
</dbReference>
<dbReference type="GO" id="GO:0006686">
    <property type="term" value="P:sphingomyelin biosynthetic process"/>
    <property type="evidence" value="ECO:0000314"/>
    <property type="project" value="UniProtKB"/>
</dbReference>
<dbReference type="CDD" id="cd01610">
    <property type="entry name" value="PAP2_like"/>
    <property type="match status" value="1"/>
</dbReference>
<dbReference type="CDD" id="cd09514">
    <property type="entry name" value="SAM_SGMS1"/>
    <property type="match status" value="1"/>
</dbReference>
<dbReference type="FunFam" id="1.10.150.50:FF:000040">
    <property type="entry name" value="Phosphatidylcholine:ceramide cholinephosphotransferase 1"/>
    <property type="match status" value="1"/>
</dbReference>
<dbReference type="Gene3D" id="1.10.150.50">
    <property type="entry name" value="Transcription Factor, Ets-1"/>
    <property type="match status" value="1"/>
</dbReference>
<dbReference type="InterPro" id="IPR001660">
    <property type="entry name" value="SAM"/>
</dbReference>
<dbReference type="InterPro" id="IPR013761">
    <property type="entry name" value="SAM/pointed_sf"/>
</dbReference>
<dbReference type="InterPro" id="IPR045221">
    <property type="entry name" value="Sphingomyelin_synth-like"/>
</dbReference>
<dbReference type="InterPro" id="IPR025749">
    <property type="entry name" value="Sphingomyelin_synth-like_dom"/>
</dbReference>
<dbReference type="PANTHER" id="PTHR21290:SF28">
    <property type="entry name" value="PHOSPHATIDYLCHOLINE:CERAMIDE CHOLINEPHOSPHOTRANSFERASE 1"/>
    <property type="match status" value="1"/>
</dbReference>
<dbReference type="PANTHER" id="PTHR21290">
    <property type="entry name" value="SPHINGOMYELIN SYNTHETASE"/>
    <property type="match status" value="1"/>
</dbReference>
<dbReference type="Pfam" id="PF14360">
    <property type="entry name" value="PAP2_C"/>
    <property type="match status" value="1"/>
</dbReference>
<dbReference type="SUPFAM" id="SSF47769">
    <property type="entry name" value="SAM/Pointed domain"/>
    <property type="match status" value="1"/>
</dbReference>
<dbReference type="PROSITE" id="PS50105">
    <property type="entry name" value="SAM_DOMAIN"/>
    <property type="match status" value="1"/>
</dbReference>
<accession>Q86VZ5</accession>
<accession>D3DWC4</accession>
<accession>Q68U43</accession>
<accession>Q6EKK0</accession>
<accession>Q75SP1</accession>
<organism evidence="24">
    <name type="scientific">Homo sapiens</name>
    <name type="common">Human</name>
    <dbReference type="NCBI Taxonomy" id="9606"/>
    <lineage>
        <taxon>Eukaryota</taxon>
        <taxon>Metazoa</taxon>
        <taxon>Chordata</taxon>
        <taxon>Craniata</taxon>
        <taxon>Vertebrata</taxon>
        <taxon>Euteleostomi</taxon>
        <taxon>Mammalia</taxon>
        <taxon>Eutheria</taxon>
        <taxon>Euarchontoglires</taxon>
        <taxon>Primates</taxon>
        <taxon>Haplorrhini</taxon>
        <taxon>Catarrhini</taxon>
        <taxon>Hominidae</taxon>
        <taxon>Homo</taxon>
    </lineage>
</organism>
<sequence length="413" mass="48617">MKEVVYWSPKKVADWLLENAMPEYCEPLEHFTGQDLINLTQEDFKKPPLCRVSSDNGQRLLDMIETLKMEHHLEAHKNGHANGHLNIGVDIPTPDGSFSIKIKPNGMPNGYRKEMIKIPMPELERSQYPMEWGKTFLAFLYALSCFVLTTVMISVVHERVPPKEVQPPLPDTFFDHFNRVQWAFSICEINGMILVGLWLIQWLLLKYKSIISRRFFCIVGTLYLYRCITMYVTTLPVPGMHFNCSPKLFGDWEAQLRRIMKLIAGGGLSITGSHNMCGDYLYSGHTVMLTLTYLFIKEYSPRRLWWYHWICWLLSVVGIFCILLAHDHYTVDVVVAYYITTRLFWWYHTMANQQVLKEASQMNLLARVWWYRPFQYFEKNVQGIVPRSYHWPFPWPVVHLSRQVKYSRLVNDT</sequence>
<feature type="chain" id="PRO_0000221068" description="Phosphatidylcholine:ceramide cholinephosphotransferase 1">
    <location>
        <begin position="1"/>
        <end position="413"/>
    </location>
</feature>
<feature type="transmembrane region" description="Helical" evidence="2">
    <location>
        <begin position="136"/>
        <end position="156"/>
    </location>
</feature>
<feature type="transmembrane region" description="Helical" evidence="2">
    <location>
        <begin position="184"/>
        <end position="204"/>
    </location>
</feature>
<feature type="transmembrane region" description="Helical" evidence="2">
    <location>
        <begin position="215"/>
        <end position="235"/>
    </location>
</feature>
<feature type="transmembrane region" description="Helical" evidence="2">
    <location>
        <begin position="276"/>
        <end position="296"/>
    </location>
</feature>
<feature type="transmembrane region" description="Helical" evidence="2">
    <location>
        <begin position="304"/>
        <end position="324"/>
    </location>
</feature>
<feature type="topological domain" description="Cytoplasmic" evidence="2">
    <location>
        <begin position="325"/>
        <end position="413"/>
    </location>
</feature>
<feature type="domain" description="SAM" evidence="3 16">
    <location>
        <begin position="7"/>
        <end position="70"/>
    </location>
</feature>
<feature type="active site" evidence="11">
    <location>
        <position position="285"/>
    </location>
</feature>
<feature type="active site" evidence="11">
    <location>
        <position position="328"/>
    </location>
</feature>
<feature type="active site" evidence="11">
    <location>
        <position position="332"/>
    </location>
</feature>
<feature type="modified residue" description="Phosphoserine" evidence="26">
    <location>
        <position position="8"/>
    </location>
</feature>
<feature type="splice variant" id="VSP_027223" description="In isoform 2." evidence="15">
    <location>
        <begin position="1"/>
        <end position="199"/>
    </location>
</feature>
<feature type="splice variant" id="VSP_027224" description="In isoform 2." evidence="15">
    <original>IQWLLLKYK</original>
    <variation>MTRMFLNNP</variation>
    <location>
        <begin position="200"/>
        <end position="208"/>
    </location>
</feature>
<feature type="mutagenesis site" description="Completely abolishes enzyme activity. No change in subcellular location." evidence="11">
    <original>S</original>
    <variation>A</variation>
    <location>
        <position position="283"/>
    </location>
</feature>
<feature type="mutagenesis site" description="Completely abolishes enzyme activity. No change in subcellular location." evidence="11">
    <original>H</original>
    <variation>A</variation>
    <location>
        <position position="285"/>
    </location>
</feature>
<feature type="mutagenesis site" description="Completely abolishes enzyme activity. No change in subcellular location." evidence="11">
    <original>H</original>
    <variation>A</variation>
    <location>
        <position position="328"/>
    </location>
</feature>
<feature type="mutagenesis site" description="Completely abolishes enzyme activity. No change in subcellular location." evidence="11">
    <original>D</original>
    <variation>A</variation>
    <location>
        <position position="332"/>
    </location>
</feature>
<feature type="sequence conflict" description="In Ref. 3; AAQ82051." evidence="16" ref="3">
    <original>P</original>
    <variation>L</variation>
    <location>
        <position position="162"/>
    </location>
</feature>
<proteinExistence type="evidence at protein level"/>
<evidence type="ECO:0000250" key="1">
    <source>
        <dbReference type="UniProtKB" id="Q8VCQ6"/>
    </source>
</evidence>
<evidence type="ECO:0000255" key="2"/>
<evidence type="ECO:0000255" key="3">
    <source>
        <dbReference type="PROSITE-ProRule" id="PRU00184"/>
    </source>
</evidence>
<evidence type="ECO:0000269" key="4">
    <source>
    </source>
</evidence>
<evidence type="ECO:0000269" key="5">
    <source>
    </source>
</evidence>
<evidence type="ECO:0000269" key="6">
    <source>
    </source>
</evidence>
<evidence type="ECO:0000269" key="7">
    <source>
    </source>
</evidence>
<evidence type="ECO:0000269" key="8">
    <source>
    </source>
</evidence>
<evidence type="ECO:0000269" key="9">
    <source>
    </source>
</evidence>
<evidence type="ECO:0000269" key="10">
    <source>
    </source>
</evidence>
<evidence type="ECO:0000269" key="11">
    <source>
    </source>
</evidence>
<evidence type="ECO:0000269" key="12">
    <source>
    </source>
</evidence>
<evidence type="ECO:0000269" key="13">
    <source>
    </source>
</evidence>
<evidence type="ECO:0000269" key="14">
    <source>
    </source>
</evidence>
<evidence type="ECO:0000303" key="15">
    <source>
    </source>
</evidence>
<evidence type="ECO:0000305" key="16"/>
<evidence type="ECO:0000305" key="17">
    <source>
    </source>
</evidence>
<evidence type="ECO:0000305" key="18">
    <source>
    </source>
</evidence>
<evidence type="ECO:0000305" key="19">
    <source>
    </source>
</evidence>
<evidence type="ECO:0000305" key="20">
    <source>
    </source>
</evidence>
<evidence type="ECO:0000305" key="21">
    <source>
    </source>
</evidence>
<evidence type="ECO:0000305" key="22">
    <source>
    </source>
</evidence>
<evidence type="ECO:0000305" key="23">
    <source>
    </source>
</evidence>
<evidence type="ECO:0000312" key="24">
    <source>
        <dbReference type="EMBL" id="AAH42899.1"/>
    </source>
</evidence>
<evidence type="ECO:0000312" key="25">
    <source>
        <dbReference type="EMBL" id="AAP37279.1"/>
    </source>
</evidence>
<evidence type="ECO:0007744" key="26">
    <source>
    </source>
</evidence>